<feature type="chain" id="PRO_0000357872" description="NADH-quinone oxidoreductase subunit D 1">
    <location>
        <begin position="1"/>
        <end position="396"/>
    </location>
</feature>
<evidence type="ECO:0000255" key="1">
    <source>
        <dbReference type="HAMAP-Rule" id="MF_01358"/>
    </source>
</evidence>
<gene>
    <name evidence="1" type="primary">nuoD1</name>
    <name type="ordered locus">Nham_1172</name>
</gene>
<accession>Q1QP34</accession>
<proteinExistence type="inferred from homology"/>
<keyword id="KW-0997">Cell inner membrane</keyword>
<keyword id="KW-1003">Cell membrane</keyword>
<keyword id="KW-0472">Membrane</keyword>
<keyword id="KW-0520">NAD</keyword>
<keyword id="KW-0874">Quinone</keyword>
<keyword id="KW-1185">Reference proteome</keyword>
<keyword id="KW-1278">Translocase</keyword>
<keyword id="KW-0813">Transport</keyword>
<keyword id="KW-0830">Ubiquinone</keyword>
<dbReference type="EC" id="7.1.1.-" evidence="1"/>
<dbReference type="EMBL" id="CP000319">
    <property type="protein sequence ID" value="ABE62013.1"/>
    <property type="molecule type" value="Genomic_DNA"/>
</dbReference>
<dbReference type="RefSeq" id="WP_011509706.1">
    <property type="nucleotide sequence ID" value="NC_007964.1"/>
</dbReference>
<dbReference type="SMR" id="Q1QP34"/>
<dbReference type="STRING" id="323097.Nham_1172"/>
<dbReference type="KEGG" id="nha:Nham_1172"/>
<dbReference type="eggNOG" id="COG0649">
    <property type="taxonomic scope" value="Bacteria"/>
</dbReference>
<dbReference type="HOGENOM" id="CLU_015134_1_1_5"/>
<dbReference type="OrthoDB" id="9801496at2"/>
<dbReference type="Proteomes" id="UP000001953">
    <property type="component" value="Chromosome"/>
</dbReference>
<dbReference type="GO" id="GO:0005886">
    <property type="term" value="C:plasma membrane"/>
    <property type="evidence" value="ECO:0007669"/>
    <property type="project" value="UniProtKB-SubCell"/>
</dbReference>
<dbReference type="GO" id="GO:0051287">
    <property type="term" value="F:NAD binding"/>
    <property type="evidence" value="ECO:0007669"/>
    <property type="project" value="InterPro"/>
</dbReference>
<dbReference type="GO" id="GO:0050136">
    <property type="term" value="F:NADH:ubiquinone reductase (non-electrogenic) activity"/>
    <property type="evidence" value="ECO:0007669"/>
    <property type="project" value="UniProtKB-UniRule"/>
</dbReference>
<dbReference type="GO" id="GO:0048038">
    <property type="term" value="F:quinone binding"/>
    <property type="evidence" value="ECO:0007669"/>
    <property type="project" value="UniProtKB-KW"/>
</dbReference>
<dbReference type="FunFam" id="1.10.645.10:FF:000005">
    <property type="entry name" value="NADH-quinone oxidoreductase subunit D"/>
    <property type="match status" value="1"/>
</dbReference>
<dbReference type="Gene3D" id="1.10.645.10">
    <property type="entry name" value="Cytochrome-c3 Hydrogenase, chain B"/>
    <property type="match status" value="1"/>
</dbReference>
<dbReference type="HAMAP" id="MF_01358">
    <property type="entry name" value="NDH1_NuoD"/>
    <property type="match status" value="1"/>
</dbReference>
<dbReference type="InterPro" id="IPR001135">
    <property type="entry name" value="NADH_Q_OxRdtase_suD"/>
</dbReference>
<dbReference type="InterPro" id="IPR014029">
    <property type="entry name" value="NADH_UbQ_OxRdtase_49kDa_CS"/>
</dbReference>
<dbReference type="InterPro" id="IPR022885">
    <property type="entry name" value="NDH1_su_D/H"/>
</dbReference>
<dbReference type="InterPro" id="IPR029014">
    <property type="entry name" value="NiFe-Hase_large"/>
</dbReference>
<dbReference type="NCBIfam" id="TIGR01962">
    <property type="entry name" value="NuoD"/>
    <property type="match status" value="1"/>
</dbReference>
<dbReference type="NCBIfam" id="NF004739">
    <property type="entry name" value="PRK06075.1"/>
    <property type="match status" value="1"/>
</dbReference>
<dbReference type="PANTHER" id="PTHR11993:SF10">
    <property type="entry name" value="NADH DEHYDROGENASE [UBIQUINONE] IRON-SULFUR PROTEIN 2, MITOCHONDRIAL"/>
    <property type="match status" value="1"/>
</dbReference>
<dbReference type="PANTHER" id="PTHR11993">
    <property type="entry name" value="NADH-UBIQUINONE OXIDOREDUCTASE 49 KDA SUBUNIT"/>
    <property type="match status" value="1"/>
</dbReference>
<dbReference type="Pfam" id="PF00346">
    <property type="entry name" value="Complex1_49kDa"/>
    <property type="match status" value="1"/>
</dbReference>
<dbReference type="SUPFAM" id="SSF56762">
    <property type="entry name" value="HydB/Nqo4-like"/>
    <property type="match status" value="1"/>
</dbReference>
<dbReference type="PROSITE" id="PS00535">
    <property type="entry name" value="COMPLEX1_49K"/>
    <property type="match status" value="1"/>
</dbReference>
<protein>
    <recommendedName>
        <fullName evidence="1">NADH-quinone oxidoreductase subunit D 1</fullName>
        <ecNumber evidence="1">7.1.1.-</ecNumber>
    </recommendedName>
    <alternativeName>
        <fullName evidence="1">NADH dehydrogenase I subunit D 1</fullName>
    </alternativeName>
    <alternativeName>
        <fullName evidence="1">NDH-1 subunit D 1</fullName>
    </alternativeName>
</protein>
<sequence length="396" mass="44954">MVEAAPRNFTINFGPQHPAAHGVLRLVLELDGEVVRRVDPHIGLLHRGTEKLIEHKTYLQALPYFDRLDYVAPMNQEHAFCLATEKLLNITIPKRGQLIRVLYCEIGRLLSHLLNVTTQAMDVGALTPPLWGFEEREKLMVFYERASGARMHANYFRVGGVHQDLPSKLLDDIWDFCDPFLKVCDDLEGLLTENRIFKQRNVGIAEVKLADAWGWGFSGVMVRGSGAAWDLRKAQPYECYSELDFDIPIGKHGDCYDRYLVRMEEMRQSVRIMKQCLEKLRLPEGQGPVATRDHKIVPPSRAEMKRSMEAMIEHFKLYTEGHRVPAGEVYVAVEAPKGEFGVYLVSDGTNQPYKCKIRAPSFAHLSAMDFLTRGHMLADVSAIIGSLDIVFGEIDR</sequence>
<reference key="1">
    <citation type="submission" date="2006-03" db="EMBL/GenBank/DDBJ databases">
        <title>Complete sequence of chromosome of Nitrobacter hamburgensis X14.</title>
        <authorList>
            <consortium name="US DOE Joint Genome Institute"/>
            <person name="Copeland A."/>
            <person name="Lucas S."/>
            <person name="Lapidus A."/>
            <person name="Barry K."/>
            <person name="Detter J.C."/>
            <person name="Glavina del Rio T."/>
            <person name="Hammon N."/>
            <person name="Israni S."/>
            <person name="Dalin E."/>
            <person name="Tice H."/>
            <person name="Pitluck S."/>
            <person name="Chain P."/>
            <person name="Malfatti S."/>
            <person name="Shin M."/>
            <person name="Vergez L."/>
            <person name="Schmutz J."/>
            <person name="Larimer F."/>
            <person name="Land M."/>
            <person name="Hauser L."/>
            <person name="Kyrpides N."/>
            <person name="Ivanova N."/>
            <person name="Ward B."/>
            <person name="Arp D."/>
            <person name="Klotz M."/>
            <person name="Stein L."/>
            <person name="O'Mullan G."/>
            <person name="Starkenburg S."/>
            <person name="Sayavedra L."/>
            <person name="Poret-Peterson A.T."/>
            <person name="Gentry M.E."/>
            <person name="Bruce D."/>
            <person name="Richardson P."/>
        </authorList>
    </citation>
    <scope>NUCLEOTIDE SEQUENCE [LARGE SCALE GENOMIC DNA]</scope>
    <source>
        <strain>DSM 10229 / NCIMB 13809 / X14</strain>
    </source>
</reference>
<organism>
    <name type="scientific">Nitrobacter hamburgensis (strain DSM 10229 / NCIMB 13809 / X14)</name>
    <dbReference type="NCBI Taxonomy" id="323097"/>
    <lineage>
        <taxon>Bacteria</taxon>
        <taxon>Pseudomonadati</taxon>
        <taxon>Pseudomonadota</taxon>
        <taxon>Alphaproteobacteria</taxon>
        <taxon>Hyphomicrobiales</taxon>
        <taxon>Nitrobacteraceae</taxon>
        <taxon>Nitrobacter</taxon>
    </lineage>
</organism>
<name>NUOD1_NITHX</name>
<comment type="function">
    <text evidence="1">NDH-1 shuttles electrons from NADH, via FMN and iron-sulfur (Fe-S) centers, to quinones in the respiratory chain. The immediate electron acceptor for the enzyme in this species is believed to be ubiquinone. Couples the redox reaction to proton translocation (for every two electrons transferred, four hydrogen ions are translocated across the cytoplasmic membrane), and thus conserves the redox energy in a proton gradient.</text>
</comment>
<comment type="catalytic activity">
    <reaction evidence="1">
        <text>a quinone + NADH + 5 H(+)(in) = a quinol + NAD(+) + 4 H(+)(out)</text>
        <dbReference type="Rhea" id="RHEA:57888"/>
        <dbReference type="ChEBI" id="CHEBI:15378"/>
        <dbReference type="ChEBI" id="CHEBI:24646"/>
        <dbReference type="ChEBI" id="CHEBI:57540"/>
        <dbReference type="ChEBI" id="CHEBI:57945"/>
        <dbReference type="ChEBI" id="CHEBI:132124"/>
    </reaction>
</comment>
<comment type="subunit">
    <text evidence="1">NDH-1 is composed of 14 different subunits. Subunits NuoB, C, D, E, F, and G constitute the peripheral sector of the complex.</text>
</comment>
<comment type="subcellular location">
    <subcellularLocation>
        <location evidence="1">Cell inner membrane</location>
        <topology evidence="1">Peripheral membrane protein</topology>
        <orientation evidence="1">Cytoplasmic side</orientation>
    </subcellularLocation>
</comment>
<comment type="similarity">
    <text evidence="1">Belongs to the complex I 49 kDa subunit family.</text>
</comment>